<organism>
    <name type="scientific">Plecturocebus moloch</name>
    <name type="common">Dusky titi monkey</name>
    <name type="synonym">Callicebus moloch</name>
    <dbReference type="NCBI Taxonomy" id="9523"/>
    <lineage>
        <taxon>Eukaryota</taxon>
        <taxon>Metazoa</taxon>
        <taxon>Chordata</taxon>
        <taxon>Craniata</taxon>
        <taxon>Vertebrata</taxon>
        <taxon>Euteleostomi</taxon>
        <taxon>Mammalia</taxon>
        <taxon>Eutheria</taxon>
        <taxon>Euarchontoglires</taxon>
        <taxon>Primates</taxon>
        <taxon>Haplorrhini</taxon>
        <taxon>Platyrrhini</taxon>
        <taxon>Pitheciidae</taxon>
        <taxon>Callicebinae</taxon>
        <taxon>Plecturocebus</taxon>
    </lineage>
</organism>
<feature type="chain" id="PRO_0000357056" description="Small EDRK-rich factor 2">
    <location>
        <begin position="1"/>
        <end position="59"/>
    </location>
</feature>
<feature type="region of interest" description="Disordered" evidence="2">
    <location>
        <begin position="1"/>
        <end position="59"/>
    </location>
</feature>
<feature type="compositionally biased region" description="Basic and acidic residues" evidence="2">
    <location>
        <begin position="1"/>
        <end position="30"/>
    </location>
</feature>
<feature type="compositionally biased region" description="Basic and acidic residues" evidence="2">
    <location>
        <begin position="50"/>
        <end position="59"/>
    </location>
</feature>
<evidence type="ECO:0000250" key="1">
    <source>
        <dbReference type="UniProtKB" id="P84101"/>
    </source>
</evidence>
<evidence type="ECO:0000256" key="2">
    <source>
        <dbReference type="SAM" id="MobiDB-lite"/>
    </source>
</evidence>
<evidence type="ECO:0000305" key="3"/>
<comment type="function">
    <text evidence="1">Positive regulator of amyloid protein aggregation and proteotoxicity (By similarity). Induces conformational changes in amyloid proteins, such as HTT, driving them into compact formations preceding the formation of aggregates (By similarity).</text>
</comment>
<comment type="similarity">
    <text evidence="3">Belongs to the SERF family.</text>
</comment>
<protein>
    <recommendedName>
        <fullName>Small EDRK-rich factor 2</fullName>
    </recommendedName>
</protein>
<name>SERF2_PLEMO</name>
<gene>
    <name type="primary">SERF2</name>
</gene>
<reference key="1">
    <citation type="submission" date="2008-03" db="EMBL/GenBank/DDBJ databases">
        <title>NISC comparative sequencing initiative.</title>
        <authorList>
            <person name="Antonellis A."/>
            <person name="Benjamin B."/>
            <person name="Blakesley R.W."/>
            <person name="Bouffard G.G."/>
            <person name="Brinkley C."/>
            <person name="Brooks S."/>
            <person name="Chu G."/>
            <person name="Chub I."/>
            <person name="Coleman H."/>
            <person name="Fuksenko T."/>
            <person name="Gestole M."/>
            <person name="Gregory M."/>
            <person name="Guan X."/>
            <person name="Gupta J."/>
            <person name="Gurson N."/>
            <person name="Han E."/>
            <person name="Han J."/>
            <person name="Hansen N."/>
            <person name="Hargrove A."/>
            <person name="Hines-Harris K."/>
            <person name="Ho S.-L."/>
            <person name="Hu P."/>
            <person name="Hunter G."/>
            <person name="Hurle B."/>
            <person name="Idol J.R."/>
            <person name="Johnson T."/>
            <person name="Knight E."/>
            <person name="Kwong P."/>
            <person name="Lee-Lin S.-Q."/>
            <person name="Legaspi R."/>
            <person name="Madden M."/>
            <person name="Maduro Q.L."/>
            <person name="Maduro V.B."/>
            <person name="Margulies E.H."/>
            <person name="Masiello C."/>
            <person name="Maskeri B."/>
            <person name="McDowell J."/>
            <person name="Merkulov G."/>
            <person name="Montemayor C."/>
            <person name="Mullikin J.C."/>
            <person name="Park M."/>
            <person name="Prasad A."/>
            <person name="Ramsahoye C."/>
            <person name="Reddix-Dugue N."/>
            <person name="Riebow N."/>
            <person name="Schandler K."/>
            <person name="Schueler M.G."/>
            <person name="Sison C."/>
            <person name="Smith L."/>
            <person name="Stantripop S."/>
            <person name="Thomas J.W."/>
            <person name="Thomas P.J."/>
            <person name="Tsipouri V."/>
            <person name="Young A."/>
            <person name="Green E.D."/>
        </authorList>
    </citation>
    <scope>NUCLEOTIDE SEQUENCE [LARGE SCALE GENOMIC DNA]</scope>
</reference>
<proteinExistence type="inferred from homology"/>
<sequence>MTRGNQRELARQKNMKKQSDSVKGKRRDDGLSAAARKQRDSEIMQQKQKKANEKKEEPK</sequence>
<dbReference type="EMBL" id="DP000636">
    <property type="protein sequence ID" value="ACA57912.1"/>
    <property type="molecule type" value="Genomic_DNA"/>
</dbReference>
<dbReference type="InterPro" id="IPR007513">
    <property type="entry name" value="SERF-like_N"/>
</dbReference>
<dbReference type="InterPro" id="IPR040211">
    <property type="entry name" value="SERF1/2-like"/>
</dbReference>
<dbReference type="PANTHER" id="PTHR13596">
    <property type="entry name" value="SMALL EDRK-RICH FACTOR 1"/>
    <property type="match status" value="1"/>
</dbReference>
<dbReference type="PANTHER" id="PTHR13596:SF2">
    <property type="entry name" value="SMALL EDRK-RICH FACTOR 2"/>
    <property type="match status" value="1"/>
</dbReference>
<dbReference type="Pfam" id="PF04419">
    <property type="entry name" value="SERF-like_N"/>
    <property type="match status" value="1"/>
</dbReference>
<accession>B1MTI8</accession>